<organism>
    <name type="scientific">Lactococcus lactis subsp. lactis (strain IL1403)</name>
    <name type="common">Streptococcus lactis</name>
    <dbReference type="NCBI Taxonomy" id="272623"/>
    <lineage>
        <taxon>Bacteria</taxon>
        <taxon>Bacillati</taxon>
        <taxon>Bacillota</taxon>
        <taxon>Bacilli</taxon>
        <taxon>Lactobacillales</taxon>
        <taxon>Streptococcaceae</taxon>
        <taxon>Lactococcus</taxon>
    </lineage>
</organism>
<sequence length="469" mass="50911">MSSGKITQIIGPVVDVEFGSDAKLPEINNALIVYKDVNGLKTKITLEVALELGDGAVRTIAMESTDGLTRGLEVLDTGKAVSVPVGEATLGRVFNVLGDVIDGGEEFAADAERNPIHKKAPTFDELSTANEVLVTGIKVVDLLAPYLKGGKVGLFGGAGVGKTVLIQELIHNIAQEHGGISVFTGVGERTREGNDLYWEMKESGVIEKTAMVFGQMNEPPGARMRVALTGLTIAEYFRDVQGQDVLLFIDNIFRFTQAGSEVSALLGRMPSAVGYQPTLATEMGQLQERITSTKKGSVTSIQAIYVPADDYTDPAPATAFAHLDATTNLERRLTQMGIYPAVDPLASSSRALTPEIVGEEHYEVAMEVQRVLQRYKELQDIIAILGMDELSDDEKILVGRARRIQFFLSQNFHVAEQFTGQPGSYVPIDKTVHDFKEILEGKYDEVPEDAFRGVGPIEDVLEKAKSMGY</sequence>
<dbReference type="EC" id="7.1.2.2" evidence="1"/>
<dbReference type="EMBL" id="AF393838">
    <property type="protein sequence ID" value="AAK84019.1"/>
    <property type="molecule type" value="Genomic_DNA"/>
</dbReference>
<dbReference type="EMBL" id="AB072443">
    <property type="protein sequence ID" value="BAB69471.1"/>
    <property type="molecule type" value="Genomic_DNA"/>
</dbReference>
<dbReference type="EMBL" id="AE005176">
    <property type="protein sequence ID" value="AAK05862.1"/>
    <property type="molecule type" value="Genomic_DNA"/>
</dbReference>
<dbReference type="PIR" id="D86845">
    <property type="entry name" value="D86845"/>
</dbReference>
<dbReference type="RefSeq" id="NP_267920.1">
    <property type="nucleotide sequence ID" value="NC_002662.1"/>
</dbReference>
<dbReference type="RefSeq" id="WP_010906126.1">
    <property type="nucleotide sequence ID" value="NC_002662.1"/>
</dbReference>
<dbReference type="SMR" id="Q9CES0"/>
<dbReference type="PaxDb" id="272623-L6563"/>
<dbReference type="EnsemblBacteria" id="AAK05862">
    <property type="protein sequence ID" value="AAK05862"/>
    <property type="gene ID" value="L6563"/>
</dbReference>
<dbReference type="GeneID" id="89633965"/>
<dbReference type="KEGG" id="lla:L6563"/>
<dbReference type="PATRIC" id="fig|272623.7.peg.1890"/>
<dbReference type="eggNOG" id="COG0055">
    <property type="taxonomic scope" value="Bacteria"/>
</dbReference>
<dbReference type="HOGENOM" id="CLU_022398_0_2_9"/>
<dbReference type="OrthoDB" id="9801639at2"/>
<dbReference type="Proteomes" id="UP000002196">
    <property type="component" value="Chromosome"/>
</dbReference>
<dbReference type="GO" id="GO:0005886">
    <property type="term" value="C:plasma membrane"/>
    <property type="evidence" value="ECO:0007669"/>
    <property type="project" value="UniProtKB-SubCell"/>
</dbReference>
<dbReference type="GO" id="GO:0045259">
    <property type="term" value="C:proton-transporting ATP synthase complex"/>
    <property type="evidence" value="ECO:0007669"/>
    <property type="project" value="UniProtKB-KW"/>
</dbReference>
<dbReference type="GO" id="GO:0005524">
    <property type="term" value="F:ATP binding"/>
    <property type="evidence" value="ECO:0007669"/>
    <property type="project" value="UniProtKB-UniRule"/>
</dbReference>
<dbReference type="GO" id="GO:0016887">
    <property type="term" value="F:ATP hydrolysis activity"/>
    <property type="evidence" value="ECO:0007669"/>
    <property type="project" value="InterPro"/>
</dbReference>
<dbReference type="GO" id="GO:0046933">
    <property type="term" value="F:proton-transporting ATP synthase activity, rotational mechanism"/>
    <property type="evidence" value="ECO:0007669"/>
    <property type="project" value="UniProtKB-UniRule"/>
</dbReference>
<dbReference type="CDD" id="cd18110">
    <property type="entry name" value="ATP-synt_F1_beta_C"/>
    <property type="match status" value="1"/>
</dbReference>
<dbReference type="CDD" id="cd18115">
    <property type="entry name" value="ATP-synt_F1_beta_N"/>
    <property type="match status" value="1"/>
</dbReference>
<dbReference type="CDD" id="cd01133">
    <property type="entry name" value="F1-ATPase_beta_CD"/>
    <property type="match status" value="1"/>
</dbReference>
<dbReference type="FunFam" id="1.10.1140.10:FF:000001">
    <property type="entry name" value="ATP synthase subunit beta"/>
    <property type="match status" value="1"/>
</dbReference>
<dbReference type="FunFam" id="2.40.10.170:FF:000005">
    <property type="entry name" value="ATP synthase subunit beta"/>
    <property type="match status" value="1"/>
</dbReference>
<dbReference type="FunFam" id="3.40.50.300:FF:000004">
    <property type="entry name" value="ATP synthase subunit beta"/>
    <property type="match status" value="1"/>
</dbReference>
<dbReference type="Gene3D" id="2.40.10.170">
    <property type="match status" value="1"/>
</dbReference>
<dbReference type="Gene3D" id="1.10.1140.10">
    <property type="entry name" value="Bovine Mitochondrial F1-atpase, Atp Synthase Beta Chain, Chain D, domain 3"/>
    <property type="match status" value="1"/>
</dbReference>
<dbReference type="Gene3D" id="3.40.50.300">
    <property type="entry name" value="P-loop containing nucleotide triphosphate hydrolases"/>
    <property type="match status" value="1"/>
</dbReference>
<dbReference type="HAMAP" id="MF_01347">
    <property type="entry name" value="ATP_synth_beta_bact"/>
    <property type="match status" value="1"/>
</dbReference>
<dbReference type="InterPro" id="IPR003593">
    <property type="entry name" value="AAA+_ATPase"/>
</dbReference>
<dbReference type="InterPro" id="IPR055190">
    <property type="entry name" value="ATP-synt_VA_C"/>
</dbReference>
<dbReference type="InterPro" id="IPR005722">
    <property type="entry name" value="ATP_synth_F1_bsu"/>
</dbReference>
<dbReference type="InterPro" id="IPR020003">
    <property type="entry name" value="ATPase_a/bsu_AS"/>
</dbReference>
<dbReference type="InterPro" id="IPR050053">
    <property type="entry name" value="ATPase_alpha/beta_chains"/>
</dbReference>
<dbReference type="InterPro" id="IPR004100">
    <property type="entry name" value="ATPase_F1/V1/A1_a/bsu_N"/>
</dbReference>
<dbReference type="InterPro" id="IPR036121">
    <property type="entry name" value="ATPase_F1/V1/A1_a/bsu_N_sf"/>
</dbReference>
<dbReference type="InterPro" id="IPR000194">
    <property type="entry name" value="ATPase_F1/V1/A1_a/bsu_nucl-bd"/>
</dbReference>
<dbReference type="InterPro" id="IPR024034">
    <property type="entry name" value="ATPase_F1/V1_b/a_C"/>
</dbReference>
<dbReference type="InterPro" id="IPR027417">
    <property type="entry name" value="P-loop_NTPase"/>
</dbReference>
<dbReference type="NCBIfam" id="TIGR01039">
    <property type="entry name" value="atpD"/>
    <property type="match status" value="1"/>
</dbReference>
<dbReference type="PANTHER" id="PTHR15184">
    <property type="entry name" value="ATP SYNTHASE"/>
    <property type="match status" value="1"/>
</dbReference>
<dbReference type="PANTHER" id="PTHR15184:SF71">
    <property type="entry name" value="ATP SYNTHASE SUBUNIT BETA, MITOCHONDRIAL"/>
    <property type="match status" value="1"/>
</dbReference>
<dbReference type="Pfam" id="PF00006">
    <property type="entry name" value="ATP-synt_ab"/>
    <property type="match status" value="1"/>
</dbReference>
<dbReference type="Pfam" id="PF02874">
    <property type="entry name" value="ATP-synt_ab_N"/>
    <property type="match status" value="1"/>
</dbReference>
<dbReference type="Pfam" id="PF22919">
    <property type="entry name" value="ATP-synt_VA_C"/>
    <property type="match status" value="1"/>
</dbReference>
<dbReference type="SMART" id="SM00382">
    <property type="entry name" value="AAA"/>
    <property type="match status" value="1"/>
</dbReference>
<dbReference type="SUPFAM" id="SSF47917">
    <property type="entry name" value="C-terminal domain of alpha and beta subunits of F1 ATP synthase"/>
    <property type="match status" value="1"/>
</dbReference>
<dbReference type="SUPFAM" id="SSF50615">
    <property type="entry name" value="N-terminal domain of alpha and beta subunits of F1 ATP synthase"/>
    <property type="match status" value="1"/>
</dbReference>
<dbReference type="SUPFAM" id="SSF52540">
    <property type="entry name" value="P-loop containing nucleoside triphosphate hydrolases"/>
    <property type="match status" value="1"/>
</dbReference>
<dbReference type="PROSITE" id="PS00152">
    <property type="entry name" value="ATPASE_ALPHA_BETA"/>
    <property type="match status" value="1"/>
</dbReference>
<accession>Q9CES0</accession>
<accession>Q93MY7</accession>
<accession>Q9RAU0</accession>
<gene>
    <name evidence="1" type="primary">atpD</name>
    <name type="ordered locus">LL1764</name>
    <name type="ORF">L6563</name>
</gene>
<name>ATPB_LACLA</name>
<feature type="chain" id="PRO_0000144448" description="ATP synthase subunit beta">
    <location>
        <begin position="1"/>
        <end position="469"/>
    </location>
</feature>
<feature type="binding site" evidence="1">
    <location>
        <begin position="156"/>
        <end position="163"/>
    </location>
    <ligand>
        <name>ATP</name>
        <dbReference type="ChEBI" id="CHEBI:30616"/>
    </ligand>
</feature>
<feature type="sequence conflict" description="In Ref. 2; BAB69471." evidence="2" ref="2">
    <original>I</original>
    <variation>V</variation>
    <location>
        <position position="9"/>
    </location>
</feature>
<feature type="sequence conflict" description="In Ref. 2; BAB69471." evidence="2" ref="2">
    <original>A</original>
    <variation>S</variation>
    <location>
        <position position="88"/>
    </location>
</feature>
<feature type="sequence conflict" description="In Ref. 2; BAB69471." evidence="2" ref="2">
    <original>EFA</original>
    <variation>DFP</variation>
    <location>
        <begin position="106"/>
        <end position="108"/>
    </location>
</feature>
<feature type="sequence conflict" description="In Ref. 2; BAB69471." evidence="2" ref="2">
    <original>E</original>
    <variation>A</variation>
    <location>
        <position position="462"/>
    </location>
</feature>
<keyword id="KW-0066">ATP synthesis</keyword>
<keyword id="KW-0067">ATP-binding</keyword>
<keyword id="KW-1003">Cell membrane</keyword>
<keyword id="KW-0139">CF(1)</keyword>
<keyword id="KW-0375">Hydrogen ion transport</keyword>
<keyword id="KW-0406">Ion transport</keyword>
<keyword id="KW-0472">Membrane</keyword>
<keyword id="KW-0547">Nucleotide-binding</keyword>
<keyword id="KW-1185">Reference proteome</keyword>
<keyword id="KW-1278">Translocase</keyword>
<keyword id="KW-0813">Transport</keyword>
<protein>
    <recommendedName>
        <fullName evidence="1">ATP synthase subunit beta</fullName>
        <ecNumber evidence="1">7.1.2.2</ecNumber>
    </recommendedName>
    <alternativeName>
        <fullName evidence="1">ATP synthase F1 sector subunit beta</fullName>
    </alternativeName>
    <alternativeName>
        <fullName evidence="1">F-ATPase subunit beta</fullName>
    </alternativeName>
</protein>
<comment type="function">
    <text evidence="1">Produces ATP from ADP in the presence of a proton gradient across the membrane. The catalytic sites are hosted primarily by the beta subunits.</text>
</comment>
<comment type="catalytic activity">
    <reaction evidence="1">
        <text>ATP + H2O + 4 H(+)(in) = ADP + phosphate + 5 H(+)(out)</text>
        <dbReference type="Rhea" id="RHEA:57720"/>
        <dbReference type="ChEBI" id="CHEBI:15377"/>
        <dbReference type="ChEBI" id="CHEBI:15378"/>
        <dbReference type="ChEBI" id="CHEBI:30616"/>
        <dbReference type="ChEBI" id="CHEBI:43474"/>
        <dbReference type="ChEBI" id="CHEBI:456216"/>
        <dbReference type="EC" id="7.1.2.2"/>
    </reaction>
</comment>
<comment type="subunit">
    <text evidence="1">F-type ATPases have 2 components, CF(1) - the catalytic core - and CF(0) - the membrane proton channel. CF(1) has five subunits: alpha(3), beta(3), gamma(1), delta(1), epsilon(1). CF(0) has three main subunits: a(1), b(2) and c(9-12). The alpha and beta chains form an alternating ring which encloses part of the gamma chain. CF(1) is attached to CF(0) by a central stalk formed by the gamma and epsilon chains, while a peripheral stalk is formed by the delta and b chains.</text>
</comment>
<comment type="subcellular location">
    <subcellularLocation>
        <location evidence="1">Cell membrane</location>
        <topology evidence="1">Peripheral membrane protein</topology>
    </subcellularLocation>
</comment>
<comment type="similarity">
    <text evidence="1">Belongs to the ATPase alpha/beta chains family.</text>
</comment>
<reference key="1">
    <citation type="submission" date="2001-06" db="EMBL/GenBank/DDBJ databases">
        <title>Sequence of the atp operon from Lactococcus lactis subsp. lactis CHCC373.</title>
        <authorList>
            <person name="Pedersen M.B."/>
            <person name="Kragelund L."/>
            <person name="Jensen P.R."/>
            <person name="Nilsson D."/>
        </authorList>
    </citation>
    <scope>NUCLEOTIDE SEQUENCE [GENOMIC DNA]</scope>
    <source>
        <strain>CHCC373</strain>
    </source>
</reference>
<reference key="2">
    <citation type="submission" date="2001-10" db="EMBL/GenBank/DDBJ databases">
        <title>Lactococcus lactis subsp. lactis C2 H+-ATPase operon.</title>
        <authorList>
            <person name="Ishikawa K."/>
            <person name="Fujii R."/>
            <person name="Tomita F."/>
            <person name="Yokota A."/>
        </authorList>
    </citation>
    <scope>NUCLEOTIDE SEQUENCE [GENOMIC DNA]</scope>
    <source>
        <strain>C2</strain>
    </source>
</reference>
<reference key="3">
    <citation type="journal article" date="2001" name="Genome Res.">
        <title>The complete genome sequence of the lactic acid bacterium Lactococcus lactis ssp. lactis IL1403.</title>
        <authorList>
            <person name="Bolotin A."/>
            <person name="Wincker P."/>
            <person name="Mauger S."/>
            <person name="Jaillon O."/>
            <person name="Malarme K."/>
            <person name="Weissenbach J."/>
            <person name="Ehrlich S.D."/>
            <person name="Sorokin A."/>
        </authorList>
    </citation>
    <scope>NUCLEOTIDE SEQUENCE [LARGE SCALE GENOMIC DNA]</scope>
    <source>
        <strain>IL1403</strain>
    </source>
</reference>
<proteinExistence type="inferred from homology"/>
<evidence type="ECO:0000255" key="1">
    <source>
        <dbReference type="HAMAP-Rule" id="MF_01347"/>
    </source>
</evidence>
<evidence type="ECO:0000305" key="2"/>